<comment type="function">
    <text evidence="1">Binds directly to 23S ribosomal RNA and is necessary for the in vitro assembly process of the 50S ribosomal subunit. It is not involved in the protein synthesizing functions of that subunit.</text>
</comment>
<comment type="similarity">
    <text evidence="1">Belongs to the bacterial ribosomal protein bL20 family.</text>
</comment>
<name>RL20_XANAC</name>
<proteinExistence type="inferred from homology"/>
<accession>Q8PJE3</accession>
<dbReference type="EMBL" id="AE008923">
    <property type="protein sequence ID" value="AAM37440.1"/>
    <property type="molecule type" value="Genomic_DNA"/>
</dbReference>
<dbReference type="RefSeq" id="WP_003484828.1">
    <property type="nucleotide sequence ID" value="NC_003919.1"/>
</dbReference>
<dbReference type="SMR" id="Q8PJE3"/>
<dbReference type="GeneID" id="97510906"/>
<dbReference type="KEGG" id="xac:XAC2591"/>
<dbReference type="eggNOG" id="COG0292">
    <property type="taxonomic scope" value="Bacteria"/>
</dbReference>
<dbReference type="HOGENOM" id="CLU_123265_0_1_6"/>
<dbReference type="Proteomes" id="UP000000576">
    <property type="component" value="Chromosome"/>
</dbReference>
<dbReference type="GO" id="GO:1990904">
    <property type="term" value="C:ribonucleoprotein complex"/>
    <property type="evidence" value="ECO:0007669"/>
    <property type="project" value="UniProtKB-KW"/>
</dbReference>
<dbReference type="GO" id="GO:0005840">
    <property type="term" value="C:ribosome"/>
    <property type="evidence" value="ECO:0007669"/>
    <property type="project" value="UniProtKB-KW"/>
</dbReference>
<dbReference type="GO" id="GO:0019843">
    <property type="term" value="F:rRNA binding"/>
    <property type="evidence" value="ECO:0007669"/>
    <property type="project" value="UniProtKB-UniRule"/>
</dbReference>
<dbReference type="GO" id="GO:0003735">
    <property type="term" value="F:structural constituent of ribosome"/>
    <property type="evidence" value="ECO:0007669"/>
    <property type="project" value="InterPro"/>
</dbReference>
<dbReference type="GO" id="GO:0000027">
    <property type="term" value="P:ribosomal large subunit assembly"/>
    <property type="evidence" value="ECO:0007669"/>
    <property type="project" value="UniProtKB-UniRule"/>
</dbReference>
<dbReference type="GO" id="GO:0006412">
    <property type="term" value="P:translation"/>
    <property type="evidence" value="ECO:0007669"/>
    <property type="project" value="InterPro"/>
</dbReference>
<dbReference type="CDD" id="cd07026">
    <property type="entry name" value="Ribosomal_L20"/>
    <property type="match status" value="1"/>
</dbReference>
<dbReference type="FunFam" id="1.10.1900.20:FF:000001">
    <property type="entry name" value="50S ribosomal protein L20"/>
    <property type="match status" value="1"/>
</dbReference>
<dbReference type="Gene3D" id="6.10.160.10">
    <property type="match status" value="1"/>
</dbReference>
<dbReference type="Gene3D" id="1.10.1900.20">
    <property type="entry name" value="Ribosomal protein L20"/>
    <property type="match status" value="1"/>
</dbReference>
<dbReference type="HAMAP" id="MF_00382">
    <property type="entry name" value="Ribosomal_bL20"/>
    <property type="match status" value="1"/>
</dbReference>
<dbReference type="InterPro" id="IPR005813">
    <property type="entry name" value="Ribosomal_bL20"/>
</dbReference>
<dbReference type="InterPro" id="IPR049946">
    <property type="entry name" value="RIBOSOMAL_L20_CS"/>
</dbReference>
<dbReference type="InterPro" id="IPR035566">
    <property type="entry name" value="Ribosomal_protein_bL20_C"/>
</dbReference>
<dbReference type="NCBIfam" id="TIGR01032">
    <property type="entry name" value="rplT_bact"/>
    <property type="match status" value="1"/>
</dbReference>
<dbReference type="PANTHER" id="PTHR10986">
    <property type="entry name" value="39S RIBOSOMAL PROTEIN L20"/>
    <property type="match status" value="1"/>
</dbReference>
<dbReference type="Pfam" id="PF00453">
    <property type="entry name" value="Ribosomal_L20"/>
    <property type="match status" value="1"/>
</dbReference>
<dbReference type="PRINTS" id="PR00062">
    <property type="entry name" value="RIBOSOMALL20"/>
</dbReference>
<dbReference type="SUPFAM" id="SSF74731">
    <property type="entry name" value="Ribosomal protein L20"/>
    <property type="match status" value="1"/>
</dbReference>
<dbReference type="PROSITE" id="PS00937">
    <property type="entry name" value="RIBOSOMAL_L20"/>
    <property type="match status" value="1"/>
</dbReference>
<sequence length="119" mass="13355">MARVKRGVQARRRHKKILTLAKGYYNARRKVFRVAKQAVIKAQQYAYIGRKQKKRNFRSLWITRINAAARINGLSYSRFMNGLLKAGITLDRKVLADIAVHDAAGFAALAEKAKGALAA</sequence>
<organism>
    <name type="scientific">Xanthomonas axonopodis pv. citri (strain 306)</name>
    <dbReference type="NCBI Taxonomy" id="190486"/>
    <lineage>
        <taxon>Bacteria</taxon>
        <taxon>Pseudomonadati</taxon>
        <taxon>Pseudomonadota</taxon>
        <taxon>Gammaproteobacteria</taxon>
        <taxon>Lysobacterales</taxon>
        <taxon>Lysobacteraceae</taxon>
        <taxon>Xanthomonas</taxon>
    </lineage>
</organism>
<gene>
    <name evidence="1" type="primary">rplT</name>
    <name type="ordered locus">XAC2591</name>
</gene>
<protein>
    <recommendedName>
        <fullName evidence="1">Large ribosomal subunit protein bL20</fullName>
    </recommendedName>
    <alternativeName>
        <fullName evidence="2">50S ribosomal protein L20</fullName>
    </alternativeName>
</protein>
<reference key="1">
    <citation type="journal article" date="2002" name="Nature">
        <title>Comparison of the genomes of two Xanthomonas pathogens with differing host specificities.</title>
        <authorList>
            <person name="da Silva A.C.R."/>
            <person name="Ferro J.A."/>
            <person name="Reinach F.C."/>
            <person name="Farah C.S."/>
            <person name="Furlan L.R."/>
            <person name="Quaggio R.B."/>
            <person name="Monteiro-Vitorello C.B."/>
            <person name="Van Sluys M.A."/>
            <person name="Almeida N.F. Jr."/>
            <person name="Alves L.M.C."/>
            <person name="do Amaral A.M."/>
            <person name="Bertolini M.C."/>
            <person name="Camargo L.E.A."/>
            <person name="Camarotte G."/>
            <person name="Cannavan F."/>
            <person name="Cardozo J."/>
            <person name="Chambergo F."/>
            <person name="Ciapina L.P."/>
            <person name="Cicarelli R.M.B."/>
            <person name="Coutinho L.L."/>
            <person name="Cursino-Santos J.R."/>
            <person name="El-Dorry H."/>
            <person name="Faria J.B."/>
            <person name="Ferreira A.J.S."/>
            <person name="Ferreira R.C.C."/>
            <person name="Ferro M.I.T."/>
            <person name="Formighieri E.F."/>
            <person name="Franco M.C."/>
            <person name="Greggio C.C."/>
            <person name="Gruber A."/>
            <person name="Katsuyama A.M."/>
            <person name="Kishi L.T."/>
            <person name="Leite R.P."/>
            <person name="Lemos E.G.M."/>
            <person name="Lemos M.V.F."/>
            <person name="Locali E.C."/>
            <person name="Machado M.A."/>
            <person name="Madeira A.M.B.N."/>
            <person name="Martinez-Rossi N.M."/>
            <person name="Martins E.C."/>
            <person name="Meidanis J."/>
            <person name="Menck C.F.M."/>
            <person name="Miyaki C.Y."/>
            <person name="Moon D.H."/>
            <person name="Moreira L.M."/>
            <person name="Novo M.T.M."/>
            <person name="Okura V.K."/>
            <person name="Oliveira M.C."/>
            <person name="Oliveira V.R."/>
            <person name="Pereira H.A."/>
            <person name="Rossi A."/>
            <person name="Sena J.A.D."/>
            <person name="Silva C."/>
            <person name="de Souza R.F."/>
            <person name="Spinola L.A.F."/>
            <person name="Takita M.A."/>
            <person name="Tamura R.E."/>
            <person name="Teixeira E.C."/>
            <person name="Tezza R.I.D."/>
            <person name="Trindade dos Santos M."/>
            <person name="Truffi D."/>
            <person name="Tsai S.M."/>
            <person name="White F.F."/>
            <person name="Setubal J.C."/>
            <person name="Kitajima J.P."/>
        </authorList>
    </citation>
    <scope>NUCLEOTIDE SEQUENCE [LARGE SCALE GENOMIC DNA]</scope>
    <source>
        <strain>306</strain>
    </source>
</reference>
<evidence type="ECO:0000255" key="1">
    <source>
        <dbReference type="HAMAP-Rule" id="MF_00382"/>
    </source>
</evidence>
<evidence type="ECO:0000305" key="2"/>
<feature type="chain" id="PRO_0000177267" description="Large ribosomal subunit protein bL20">
    <location>
        <begin position="1"/>
        <end position="119"/>
    </location>
</feature>
<keyword id="KW-0687">Ribonucleoprotein</keyword>
<keyword id="KW-0689">Ribosomal protein</keyword>
<keyword id="KW-0694">RNA-binding</keyword>
<keyword id="KW-0699">rRNA-binding</keyword>